<accession>P69353</accession>
<accession>P08300</accession>
<feature type="signal peptide" evidence="3">
    <location>
        <begin position="1"/>
        <end position="23"/>
    </location>
</feature>
<feature type="chain" id="PRO_0000039255" description="Fusion glycoprotein F0">
    <location>
        <begin position="24"/>
        <end position="550"/>
    </location>
</feature>
<feature type="chain" id="PRO_0000039256" description="Fusion glycoprotein F2">
    <location>
        <begin position="24"/>
        <end position="112"/>
    </location>
</feature>
<feature type="chain" id="PRO_0000039257" description="Fusion glycoprotein F1">
    <location>
        <begin position="113"/>
        <end position="550"/>
    </location>
</feature>
<feature type="topological domain" description="Extracellular" evidence="1">
    <location>
        <begin position="24"/>
        <end position="487"/>
    </location>
</feature>
<feature type="transmembrane region" description="Helical" evidence="3">
    <location>
        <begin position="488"/>
        <end position="518"/>
    </location>
</feature>
<feature type="topological domain" description="Cytoplasmic" evidence="1">
    <location>
        <begin position="519"/>
        <end position="550"/>
    </location>
</feature>
<feature type="region of interest" description="HRC" evidence="2">
    <location>
        <begin position="69"/>
        <end position="95"/>
    </location>
</feature>
<feature type="region of interest" description="Fusion peptide" evidence="2">
    <location>
        <begin position="113"/>
        <end position="138"/>
    </location>
</feature>
<feature type="region of interest" description="HRA" evidence="2">
    <location>
        <begin position="139"/>
        <end position="215"/>
    </location>
</feature>
<feature type="region of interest" description="Interaction with hemagglutinin" evidence="2">
    <location>
        <begin position="367"/>
        <end position="444"/>
    </location>
</feature>
<feature type="region of interest" description="HRB" evidence="2">
    <location>
        <begin position="445"/>
        <end position="494"/>
    </location>
</feature>
<feature type="coiled-coil region" evidence="3">
    <location>
        <begin position="138"/>
        <end position="166"/>
    </location>
</feature>
<feature type="coiled-coil region" evidence="3">
    <location>
        <begin position="462"/>
        <end position="487"/>
    </location>
</feature>
<feature type="site" description="Cleavage; by host" evidence="1">
    <location>
        <begin position="112"/>
        <end position="113"/>
    </location>
</feature>
<feature type="glycosylation site" description="N-linked (GlcNAc...) asparagine; by host" evidence="3">
    <location>
        <position position="29"/>
    </location>
</feature>
<feature type="glycosylation site" description="N-linked (GlcNAc...) asparagine; by host" evidence="3">
    <location>
        <position position="61"/>
    </location>
</feature>
<feature type="glycosylation site" description="N-linked (GlcNAc...) asparagine; by host" evidence="3">
    <location>
        <position position="67"/>
    </location>
</feature>
<feature type="disulfide bond" description="Interchain (with C-195)" evidence="2">
    <location>
        <position position="68"/>
    </location>
</feature>
<feature type="disulfide bond" description="Interchain (with C-68)" evidence="2">
    <location>
        <position position="195"/>
    </location>
</feature>
<feature type="disulfide bond" evidence="2">
    <location>
        <begin position="334"/>
        <end position="343"/>
    </location>
</feature>
<feature type="disulfide bond" evidence="2">
    <location>
        <begin position="358"/>
        <end position="366"/>
    </location>
</feature>
<feature type="disulfide bond" evidence="2">
    <location>
        <begin position="390"/>
        <end position="395"/>
    </location>
</feature>
<feature type="disulfide bond" evidence="2">
    <location>
        <begin position="397"/>
        <end position="420"/>
    </location>
</feature>
<reference key="1">
    <citation type="journal article" date="1986" name="Virology">
        <title>The nucleotide sequence of the mRNA encoding the fusion protein of measles virus (Edmonston strain): a comparison of fusion proteins from several different paramyxoviruses.</title>
        <authorList>
            <person name="Richardson C.D."/>
            <person name="Hull D."/>
            <person name="Greer P."/>
            <person name="Hasel K."/>
            <person name="Berkovich A."/>
            <person name="Englund G."/>
            <person name="Bellini W.J."/>
            <person name="Rima B."/>
            <person name="Lazzarini R.A."/>
        </authorList>
    </citation>
    <scope>NUCLEOTIDE SEQUENCE [GENOMIC RNA]</scope>
</reference>
<reference key="2">
    <citation type="journal article" date="1989" name="Virology">
        <title>Mutated and hypermutated genes of persistent measles viruses which caused lethal human brain diseases.</title>
        <authorList>
            <person name="Cattaneo R."/>
            <person name="Schmid A."/>
            <person name="Spielhofer P."/>
            <person name="Kaelin K."/>
            <person name="Baczko K."/>
            <person name="Meulen V."/>
            <person name="Pardowitz J."/>
            <person name="Flanagan S."/>
            <person name="Rima B.K."/>
            <person name="Udem S.A."/>
        </authorList>
    </citation>
    <scope>NUCLEOTIDE SEQUENCE [GENOMIC RNA]</scope>
</reference>
<reference key="3">
    <citation type="journal article" date="1992" name="Virology">
        <title>Subacute sclerosing panencephalitis is typically characterized by alterations in the fusion protein cytoplasmic domain of the persisting measles virus.</title>
        <authorList>
            <person name="Schmid A."/>
            <person name="Spielhofer P."/>
            <person name="Cattaneo R."/>
            <person name="Baczko K."/>
            <person name="Ter Meulen V."/>
            <person name="Billeter M.A."/>
        </authorList>
    </citation>
    <scope>NUCLEOTIDE SEQUENCE [GENOMIC RNA]</scope>
</reference>
<reference key="4">
    <citation type="journal article" date="1994" name="Virus Res.">
        <title>Comparison of sequences of the H, F, and N coding genes of measles virus vaccine strains.</title>
        <authorList>
            <person name="Rota J.S."/>
            <person name="Wang Z.D."/>
            <person name="Rota P.A."/>
            <person name="Bellini W.J."/>
        </authorList>
    </citation>
    <scope>NUCLEOTIDE SEQUENCE [GENOMIC RNA]</scope>
</reference>
<reference key="5">
    <citation type="journal article" date="1998" name="Virology">
        <title>The role of subtilisin-like proprotein convertases for cleavage of the measles virus fusion glycoprotein in different cell types.</title>
        <authorList>
            <person name="Bolt G."/>
            <person name="Pedersen I.R."/>
        </authorList>
    </citation>
    <scope>PROTEOLYTIC CLEAVAGE BY HOST FURIN</scope>
</reference>
<name>FUS_MEASE</name>
<organismHost>
    <name type="scientific">Homo sapiens</name>
    <name type="common">Human</name>
    <dbReference type="NCBI Taxonomy" id="9606"/>
</organismHost>
<keyword id="KW-0002">3D-structure</keyword>
<keyword id="KW-0165">Cleavage on pair of basic residues</keyword>
<keyword id="KW-0175">Coiled coil</keyword>
<keyword id="KW-1015">Disulfide bond</keyword>
<keyword id="KW-1169">Fusion of virus membrane with host cell membrane</keyword>
<keyword id="KW-1168">Fusion of virus membrane with host membrane</keyword>
<keyword id="KW-0325">Glycoprotein</keyword>
<keyword id="KW-1032">Host cell membrane</keyword>
<keyword id="KW-1043">Host membrane</keyword>
<keyword id="KW-0472">Membrane</keyword>
<keyword id="KW-0732">Signal</keyword>
<keyword id="KW-0812">Transmembrane</keyword>
<keyword id="KW-1133">Transmembrane helix</keyword>
<keyword id="KW-0261">Viral envelope protein</keyword>
<keyword id="KW-1162">Viral penetration into host cytoplasm</keyword>
<keyword id="KW-0946">Virion</keyword>
<keyword id="KW-1160">Virus entry into host cell</keyword>
<proteinExistence type="evidence at protein level"/>
<evidence type="ECO:0000250" key="1"/>
<evidence type="ECO:0000250" key="2">
    <source>
        <dbReference type="UniProtKB" id="Q786F3"/>
    </source>
</evidence>
<evidence type="ECO:0000255" key="3"/>
<evidence type="ECO:0000305" key="4"/>
<organism>
    <name type="scientific">Measles virus (strain Edmonston)</name>
    <name type="common">MeV</name>
    <name type="synonym">Subacute sclerose panencephalitis virus</name>
    <dbReference type="NCBI Taxonomy" id="11235"/>
    <lineage>
        <taxon>Viruses</taxon>
        <taxon>Riboviria</taxon>
        <taxon>Orthornavirae</taxon>
        <taxon>Negarnaviricota</taxon>
        <taxon>Haploviricotina</taxon>
        <taxon>Monjiviricetes</taxon>
        <taxon>Mononegavirales</taxon>
        <taxon>Paramyxoviridae</taxon>
        <taxon>Orthoparamyxovirinae</taxon>
        <taxon>Morbillivirus</taxon>
        <taxon>Morbillivirus hominis</taxon>
        <taxon>Measles morbillivirus</taxon>
    </lineage>
</organism>
<protein>
    <recommendedName>
        <fullName>Fusion glycoprotein F0</fullName>
    </recommendedName>
    <component>
        <recommendedName>
            <fullName>Fusion glycoprotein F2</fullName>
        </recommendedName>
    </component>
    <component>
        <recommendedName>
            <fullName>Fusion glycoprotein F1</fullName>
        </recommendedName>
    </component>
</protein>
<gene>
    <name type="primary">F</name>
</gene>
<dbReference type="EMBL" id="M14915">
    <property type="protein sequence ID" value="AAA46423.1"/>
    <property type="molecule type" value="Genomic_RNA"/>
</dbReference>
<dbReference type="EMBL" id="K01711">
    <property type="protein sequence ID" value="AAA75498.1"/>
    <property type="status" value="ALT_INIT"/>
    <property type="molecule type" value="Genomic_RNA"/>
</dbReference>
<dbReference type="EMBL" id="K01711">
    <property type="protein sequence ID" value="AAA75499.1"/>
    <property type="molecule type" value="Genomic_RNA"/>
</dbReference>
<dbReference type="EMBL" id="U03657">
    <property type="protein sequence ID" value="AAA56647.1"/>
    <property type="status" value="ALT_INIT"/>
    <property type="molecule type" value="Genomic_RNA"/>
</dbReference>
<dbReference type="RefSeq" id="NP_056922.1">
    <property type="nucleotide sequence ID" value="NC_001498.1"/>
</dbReference>
<dbReference type="PDB" id="8XNE">
    <property type="method" value="X-ray"/>
    <property type="resolution" value="1.16 A"/>
    <property type="chains" value="A=143-184, B=452-486"/>
</dbReference>
<dbReference type="PDB" id="8XO2">
    <property type="method" value="X-ray"/>
    <property type="resolution" value="1.31 A"/>
    <property type="chains" value="A/C/E=143-184, B/D/F=452-486"/>
</dbReference>
<dbReference type="PDB" id="8XO3">
    <property type="method" value="X-ray"/>
    <property type="resolution" value="1.10 A"/>
    <property type="chains" value="A=138-184, B=452-486"/>
</dbReference>
<dbReference type="PDB" id="8XO4">
    <property type="method" value="X-ray"/>
    <property type="resolution" value="2.36 A"/>
    <property type="chains" value="A/C/E/G/I/K/M/O/Q/S/U/W=143-184"/>
</dbReference>
<dbReference type="PDB" id="8XO5">
    <property type="method" value="X-ray"/>
    <property type="resolution" value="1.21 A"/>
    <property type="chains" value="A=145-184"/>
</dbReference>
<dbReference type="PDB" id="8XO6">
    <property type="method" value="X-ray"/>
    <property type="resolution" value="1.46 A"/>
    <property type="chains" value="A/C/E=143-184"/>
</dbReference>
<dbReference type="PDB" id="8XO7">
    <property type="method" value="X-ray"/>
    <property type="resolution" value="2.17 A"/>
    <property type="chains" value="A/C/E/G/I/K=143-184"/>
</dbReference>
<dbReference type="PDB" id="8XO8">
    <property type="method" value="X-ray"/>
    <property type="resolution" value="1.85 A"/>
    <property type="chains" value="A/C/E/G/I/K=143-184"/>
</dbReference>
<dbReference type="PDBsum" id="8XNE"/>
<dbReference type="PDBsum" id="8XO2"/>
<dbReference type="PDBsum" id="8XO3"/>
<dbReference type="PDBsum" id="8XO4"/>
<dbReference type="PDBsum" id="8XO5"/>
<dbReference type="PDBsum" id="8XO6"/>
<dbReference type="PDBsum" id="8XO7"/>
<dbReference type="PDBsum" id="8XO8"/>
<dbReference type="SMR" id="P69353"/>
<dbReference type="GlyCosmos" id="P69353">
    <property type="glycosylation" value="3 sites, No reported glycans"/>
</dbReference>
<dbReference type="GeneID" id="1489800"/>
<dbReference type="KEGG" id="vg:1489800"/>
<dbReference type="Proteomes" id="UP000000833">
    <property type="component" value="Genome"/>
</dbReference>
<dbReference type="GO" id="GO:0020002">
    <property type="term" value="C:host cell plasma membrane"/>
    <property type="evidence" value="ECO:0007669"/>
    <property type="project" value="UniProtKB-SubCell"/>
</dbReference>
<dbReference type="GO" id="GO:0016020">
    <property type="term" value="C:membrane"/>
    <property type="evidence" value="ECO:0007669"/>
    <property type="project" value="UniProtKB-KW"/>
</dbReference>
<dbReference type="GO" id="GO:0019031">
    <property type="term" value="C:viral envelope"/>
    <property type="evidence" value="ECO:0007669"/>
    <property type="project" value="UniProtKB-KW"/>
</dbReference>
<dbReference type="GO" id="GO:0055036">
    <property type="term" value="C:virion membrane"/>
    <property type="evidence" value="ECO:0007669"/>
    <property type="project" value="UniProtKB-SubCell"/>
</dbReference>
<dbReference type="GO" id="GO:0019064">
    <property type="term" value="P:fusion of virus membrane with host plasma membrane"/>
    <property type="evidence" value="ECO:0007669"/>
    <property type="project" value="UniProtKB-KW"/>
</dbReference>
<dbReference type="GO" id="GO:0046718">
    <property type="term" value="P:symbiont entry into host cell"/>
    <property type="evidence" value="ECO:0007669"/>
    <property type="project" value="UniProtKB-KW"/>
</dbReference>
<dbReference type="Gene3D" id="1.10.287.2480">
    <property type="match status" value="1"/>
</dbReference>
<dbReference type="Gene3D" id="6.10.10.110">
    <property type="match status" value="1"/>
</dbReference>
<dbReference type="Gene3D" id="2.60.40.1690">
    <property type="entry name" value="Head and neck region of the ectodomain of NDV fusion glycoprotein"/>
    <property type="match status" value="1"/>
</dbReference>
<dbReference type="Gene3D" id="2.40.490.10">
    <property type="entry name" value="Newcastle disease virus like domain"/>
    <property type="match status" value="1"/>
</dbReference>
<dbReference type="InterPro" id="IPR000776">
    <property type="entry name" value="Fusion_F0_Paramyxovir"/>
</dbReference>
<dbReference type="Pfam" id="PF00523">
    <property type="entry name" value="Fusion_gly"/>
    <property type="match status" value="1"/>
</dbReference>
<dbReference type="SUPFAM" id="SSF69922">
    <property type="entry name" value="Head and neck region of the ectodomain of NDV fusion glycoprotein"/>
    <property type="match status" value="1"/>
</dbReference>
<dbReference type="SUPFAM" id="SSF58069">
    <property type="entry name" value="Virus ectodomain"/>
    <property type="match status" value="1"/>
</dbReference>
<sequence length="550" mass="59532">MGLKVNVSAIFMAVLLTLQTPTGQIHWGNLSKIGVVGIGSASYKVMTRSSHQSLVIKLMPNITLLNNCTRVEIAEYRRLLRTVLEPIRDALNAMTQNIRPVQSVASSRRHKRFAGVVLAGAALGVATAAQITAGIALHQSMLNSQAIDNLRASLETTNQAIEAIRQAGQEMILAVQGVQDYINNELIPSMNQLSCDLIGQKLGLKLLRYYTEILSLFGPSLRDPISAEISIQALSYALGGDINKVLEKLGYSGGDLLGILESRGIKARITHVDTESYFIVLSIAYPTLSEIKGVIVHRLEGVSYNIGSQEWYTTVPKYVATQGYLISNFDESSCTFMPEGTVCSQNALYPMSPLLQECLRGSTKSCARTLVSGSFGNRFILSQGNLIANCASILCKCYTTGTIINQDPDKILTYIAADHCPVVEVNGVTIQVGSRRYPDAVYLHRIDLGPPISLERLDVGTNLGNAIAKLEDAKELLESSDQILRSMKGLSSTSIVYILIAVCLGGLIGIPALICCCRGRCNKKGEQVGMSRPGLKPDLTGTSKSYVRSL</sequence>
<comment type="function">
    <text evidence="1 2">Class I viral fusion protein. Under the current model, the protein has at least 3 conformational states: pre-fusion native state, pre-hairpin intermediate state, and post-fusion hairpin state. During viral and plasma cell membrane fusion, the heptad repeat (HR) regions assume a trimer-of-hairpins structure, positioning the fusion peptide in close proximity to the C-terminal region of the ectodomain. The formation of this structure appears to drive apposition and subsequent fusion of viral and plasma cell membranes. Directs fusion of viral and cellular membranes leading to delivery of the nucleocapsid into the cytoplasm. This fusion is pH independent and occurs directly at the outer cell membrane. During viral entry or virus-mediated fusion between infected cells and neighboring susceptible cells, the head domain of the H protein initially binds to its receptor and then the stalk region of the H protein transmits the fusion-triggering signal to the F protein (By similarity). Upon HN binding to its cellular receptor, the hydrophobic fusion peptide is unmasked and interacts with the cellular membrane, inducing the fusion between cell and virion membranes. Later in infection, F proteins expressed at the plasma membrane of infected cells could mediate fusion with adjacent cells to form syncytia, a cytopathic effect that could lead to tissue necrosis (By similarity).</text>
</comment>
<comment type="function">
    <text evidence="2">Some hyperfusogenic isolates can induce membrane fusion in SLAM- and nectin-4-negative cells and are linked to fatal subacute sclerosing panencephalitis (SSPE) or measles inclusion body encephalitis (MIBE). The neuropathogenicity is closely associated with enhanced propagation mediated by cell-to-cell fusion in the brain, which is principally regulated by hyperfusogenic mutations of the viral F protein. Cell-to-cell transmission of the virus also occurs with hyperfusogenic isolates.</text>
</comment>
<comment type="subunit">
    <text evidence="2">Homotrimer of disulfide-linked F1-F2.</text>
</comment>
<comment type="subcellular location">
    <subcellularLocation>
        <location evidence="1">Virion membrane</location>
        <topology evidence="1">Single-pass type I membrane protein</topology>
    </subcellularLocation>
    <subcellularLocation>
        <location evidence="1">Host cell membrane</location>
        <topology evidence="1">Single-pass membrane protein</topology>
    </subcellularLocation>
</comment>
<comment type="domain">
    <text evidence="2">Contains 3 heptad repreat regions, HRA, HRB and HRC.</text>
</comment>
<comment type="PTM">
    <text evidence="2">The inactive precursor F0 is glycosylated and proteolytically cleaved into F1 and F2 to be functionally active. The cleavage is mediated by host furin during the transport and maturation of the polypeptide.</text>
</comment>
<comment type="similarity">
    <text evidence="4">Belongs to the paramyxoviruses fusion glycoprotein family.</text>
</comment>
<comment type="sequence caution" evidence="4">
    <conflict type="erroneous initiation">
        <sequence resource="EMBL-CDS" id="AAA56647"/>
    </conflict>
</comment>
<comment type="sequence caution" evidence="4">
    <conflict type="erroneous initiation">
        <sequence resource="EMBL-CDS" id="AAA75498"/>
    </conflict>
</comment>